<accession>Q31NV7</accession>
<feature type="chain" id="PRO_0000298467" description="Cytochrome b6-f complex iron-sulfur subunit">
    <location>
        <begin position="1"/>
        <end position="179"/>
    </location>
</feature>
<feature type="transmembrane region" description="Helical" evidence="1">
    <location>
        <begin position="21"/>
        <end position="43"/>
    </location>
</feature>
<feature type="domain" description="Rieske" evidence="1">
    <location>
        <begin position="61"/>
        <end position="162"/>
    </location>
</feature>
<feature type="binding site" evidence="1">
    <location>
        <position position="108"/>
    </location>
    <ligand>
        <name>[2Fe-2S] cluster</name>
        <dbReference type="ChEBI" id="CHEBI:190135"/>
    </ligand>
</feature>
<feature type="binding site" evidence="1">
    <location>
        <position position="110"/>
    </location>
    <ligand>
        <name>[2Fe-2S] cluster</name>
        <dbReference type="ChEBI" id="CHEBI:190135"/>
    </ligand>
</feature>
<feature type="binding site" evidence="1">
    <location>
        <position position="126"/>
    </location>
    <ligand>
        <name>[2Fe-2S] cluster</name>
        <dbReference type="ChEBI" id="CHEBI:190135"/>
    </ligand>
</feature>
<feature type="binding site" evidence="1">
    <location>
        <position position="129"/>
    </location>
    <ligand>
        <name>[2Fe-2S] cluster</name>
        <dbReference type="ChEBI" id="CHEBI:190135"/>
    </ligand>
</feature>
<feature type="disulfide bond" evidence="1">
    <location>
        <begin position="113"/>
        <end position="128"/>
    </location>
</feature>
<sequence length="179" mass="18834">MTQVSGASDVPSMGRRQFMNLLTFGSVTGVALGALYPVVNYFIPPSSGGSGGGVAAKDALGNDVVLSKFLADHNVGDRTLVQGLKGDPTYLVVESSEAIGDYGINAVCTHLGCVVPWNASENKFKCPCHGSQYDATGKVVRGPAPLSLALAHVSVTDDKVFLSPWTETDFRTGDNPWWA</sequence>
<proteinExistence type="inferred from homology"/>
<evidence type="ECO:0000255" key="1">
    <source>
        <dbReference type="HAMAP-Rule" id="MF_01335"/>
    </source>
</evidence>
<gene>
    <name evidence="1" type="primary">petC</name>
    <name type="ordered locus">Synpcc7942_1232</name>
</gene>
<comment type="function">
    <text evidence="1">Component of the cytochrome b6-f complex, which mediates electron transfer between photosystem II (PSII) and photosystem I (PSI), cyclic electron flow around PSI, and state transitions.</text>
</comment>
<comment type="catalytic activity">
    <reaction evidence="1">
        <text>2 oxidized [plastocyanin] + a plastoquinol + 2 H(+)(in) = 2 reduced [plastocyanin] + a plastoquinone + 4 H(+)(out)</text>
        <dbReference type="Rhea" id="RHEA:22148"/>
        <dbReference type="Rhea" id="RHEA-COMP:9561"/>
        <dbReference type="Rhea" id="RHEA-COMP:9562"/>
        <dbReference type="Rhea" id="RHEA-COMP:10039"/>
        <dbReference type="Rhea" id="RHEA-COMP:10040"/>
        <dbReference type="ChEBI" id="CHEBI:15378"/>
        <dbReference type="ChEBI" id="CHEBI:17757"/>
        <dbReference type="ChEBI" id="CHEBI:29036"/>
        <dbReference type="ChEBI" id="CHEBI:49552"/>
        <dbReference type="ChEBI" id="CHEBI:62192"/>
        <dbReference type="EC" id="7.1.1.6"/>
    </reaction>
</comment>
<comment type="cofactor">
    <cofactor evidence="1">
        <name>[2Fe-2S] cluster</name>
        <dbReference type="ChEBI" id="CHEBI:190135"/>
    </cofactor>
    <text evidence="1">Binds 1 [2Fe-2S] cluster per subunit.</text>
</comment>
<comment type="subunit">
    <text evidence="1">The 4 large subunits of the cytochrome b6-f complex are cytochrome b6, subunit IV (17 kDa polypeptide, PetD), cytochrome f and the Rieske protein, while the 4 small subunits are PetG, PetL, PetM and PetN. The complex functions as a dimer.</text>
</comment>
<comment type="subcellular location">
    <subcellularLocation>
        <location evidence="1">Cellular thylakoid membrane</location>
        <topology evidence="1">Single-pass membrane protein</topology>
    </subcellularLocation>
    <text evidence="1">The transmembrane helix obliquely spans the membrane in one monomer, and its extrinsic C-terminal domain is part of the other monomer.</text>
</comment>
<comment type="miscellaneous">
    <text>The Rieske iron-sulfur protein is a high potential 2Fe-2S protein.</text>
</comment>
<comment type="similarity">
    <text evidence="1">Belongs to the Rieske iron-sulfur protein family.</text>
</comment>
<keyword id="KW-0001">2Fe-2S</keyword>
<keyword id="KW-1015">Disulfide bond</keyword>
<keyword id="KW-0249">Electron transport</keyword>
<keyword id="KW-0408">Iron</keyword>
<keyword id="KW-0411">Iron-sulfur</keyword>
<keyword id="KW-0472">Membrane</keyword>
<keyword id="KW-0479">Metal-binding</keyword>
<keyword id="KW-1185">Reference proteome</keyword>
<keyword id="KW-0793">Thylakoid</keyword>
<keyword id="KW-1278">Translocase</keyword>
<keyword id="KW-0812">Transmembrane</keyword>
<keyword id="KW-1133">Transmembrane helix</keyword>
<keyword id="KW-0813">Transport</keyword>
<reference key="1">
    <citation type="submission" date="2005-08" db="EMBL/GenBank/DDBJ databases">
        <title>Complete sequence of chromosome 1 of Synechococcus elongatus PCC 7942.</title>
        <authorList>
            <consortium name="US DOE Joint Genome Institute"/>
            <person name="Copeland A."/>
            <person name="Lucas S."/>
            <person name="Lapidus A."/>
            <person name="Barry K."/>
            <person name="Detter J.C."/>
            <person name="Glavina T."/>
            <person name="Hammon N."/>
            <person name="Israni S."/>
            <person name="Pitluck S."/>
            <person name="Schmutz J."/>
            <person name="Larimer F."/>
            <person name="Land M."/>
            <person name="Kyrpides N."/>
            <person name="Lykidis A."/>
            <person name="Golden S."/>
            <person name="Richardson P."/>
        </authorList>
    </citation>
    <scope>NUCLEOTIDE SEQUENCE [LARGE SCALE GENOMIC DNA]</scope>
    <source>
        <strain>ATCC 33912 / PCC 7942 / FACHB-805</strain>
    </source>
</reference>
<organism>
    <name type="scientific">Synechococcus elongatus (strain ATCC 33912 / PCC 7942 / FACHB-805)</name>
    <name type="common">Anacystis nidulans R2</name>
    <dbReference type="NCBI Taxonomy" id="1140"/>
    <lineage>
        <taxon>Bacteria</taxon>
        <taxon>Bacillati</taxon>
        <taxon>Cyanobacteriota</taxon>
        <taxon>Cyanophyceae</taxon>
        <taxon>Synechococcales</taxon>
        <taxon>Synechococcaceae</taxon>
        <taxon>Synechococcus</taxon>
    </lineage>
</organism>
<name>UCRI_SYNE7</name>
<protein>
    <recommendedName>
        <fullName evidence="1">Cytochrome b6-f complex iron-sulfur subunit</fullName>
        <ecNumber evidence="1">7.1.1.6</ecNumber>
    </recommendedName>
    <alternativeName>
        <fullName evidence="1">Plastohydroquinone:plastocyanin oxidoreductase iron-sulfur protein</fullName>
        <shortName evidence="1">ISP</shortName>
        <shortName evidence="1">RISP</shortName>
    </alternativeName>
    <alternativeName>
        <fullName evidence="1">Rieske iron-sulfur protein</fullName>
    </alternativeName>
</protein>
<dbReference type="EC" id="7.1.1.6" evidence="1"/>
<dbReference type="EMBL" id="CP000100">
    <property type="protein sequence ID" value="ABB57262.1"/>
    <property type="molecule type" value="Genomic_DNA"/>
</dbReference>
<dbReference type="RefSeq" id="WP_011242632.1">
    <property type="nucleotide sequence ID" value="NZ_JACJTX010000003.1"/>
</dbReference>
<dbReference type="SMR" id="Q31NV7"/>
<dbReference type="STRING" id="1140.Synpcc7942_1232"/>
<dbReference type="TCDB" id="3.D.3.5.3">
    <property type="family name" value="the proton-translocating quinol:cytochrome c reductase (qcr) superfamily"/>
</dbReference>
<dbReference type="PaxDb" id="1140-Synpcc7942_1232"/>
<dbReference type="KEGG" id="syf:Synpcc7942_1232"/>
<dbReference type="eggNOG" id="COG0723">
    <property type="taxonomic scope" value="Bacteria"/>
</dbReference>
<dbReference type="HOGENOM" id="CLU_055690_8_0_3"/>
<dbReference type="OrthoDB" id="9767869at2"/>
<dbReference type="BioCyc" id="MetaCyc:SYNPCC7942_1232-MONOMER"/>
<dbReference type="BioCyc" id="SYNEL:SYNPCC7942_1232-MONOMER"/>
<dbReference type="Proteomes" id="UP000889800">
    <property type="component" value="Chromosome"/>
</dbReference>
<dbReference type="GO" id="GO:0031676">
    <property type="term" value="C:plasma membrane-derived thylakoid membrane"/>
    <property type="evidence" value="ECO:0007669"/>
    <property type="project" value="UniProtKB-SubCell"/>
</dbReference>
<dbReference type="GO" id="GO:0051537">
    <property type="term" value="F:2 iron, 2 sulfur cluster binding"/>
    <property type="evidence" value="ECO:0007669"/>
    <property type="project" value="UniProtKB-KW"/>
</dbReference>
<dbReference type="GO" id="GO:0045158">
    <property type="term" value="F:electron transporter, transferring electrons within cytochrome b6/f complex of photosystem II activity"/>
    <property type="evidence" value="ECO:0007669"/>
    <property type="project" value="UniProtKB-UniRule"/>
</dbReference>
<dbReference type="GO" id="GO:0046872">
    <property type="term" value="F:metal ion binding"/>
    <property type="evidence" value="ECO:0007669"/>
    <property type="project" value="UniProtKB-KW"/>
</dbReference>
<dbReference type="GO" id="GO:0004497">
    <property type="term" value="F:monooxygenase activity"/>
    <property type="evidence" value="ECO:0007669"/>
    <property type="project" value="UniProtKB-ARBA"/>
</dbReference>
<dbReference type="GO" id="GO:0016705">
    <property type="term" value="F:oxidoreductase activity, acting on paired donors, with incorporation or reduction of molecular oxygen"/>
    <property type="evidence" value="ECO:0007669"/>
    <property type="project" value="UniProtKB-ARBA"/>
</dbReference>
<dbReference type="GO" id="GO:0009496">
    <property type="term" value="F:plastoquinol--plastocyanin reductase activity"/>
    <property type="evidence" value="ECO:0007669"/>
    <property type="project" value="UniProtKB-UniRule"/>
</dbReference>
<dbReference type="GO" id="GO:0015979">
    <property type="term" value="P:photosynthesis"/>
    <property type="evidence" value="ECO:0007669"/>
    <property type="project" value="UniProtKB-UniRule"/>
</dbReference>
<dbReference type="CDD" id="cd03471">
    <property type="entry name" value="Rieske_cytochrome_b6f"/>
    <property type="match status" value="1"/>
</dbReference>
<dbReference type="FunFam" id="2.102.10.10:FF:000007">
    <property type="entry name" value="Cytochrome b6-f complex iron-sulfur subunit"/>
    <property type="match status" value="1"/>
</dbReference>
<dbReference type="Gene3D" id="2.102.10.10">
    <property type="entry name" value="Rieske [2Fe-2S] iron-sulphur domain"/>
    <property type="match status" value="1"/>
</dbReference>
<dbReference type="Gene3D" id="1.20.5.700">
    <property type="entry name" value="Single helix bin"/>
    <property type="match status" value="1"/>
</dbReference>
<dbReference type="HAMAP" id="MF_01335">
    <property type="entry name" value="Cytb6_f_Rieske"/>
    <property type="match status" value="1"/>
</dbReference>
<dbReference type="InterPro" id="IPR023960">
    <property type="entry name" value="Cyt_b6_f_Rieske"/>
</dbReference>
<dbReference type="InterPro" id="IPR017941">
    <property type="entry name" value="Rieske_2Fe-2S"/>
</dbReference>
<dbReference type="InterPro" id="IPR036922">
    <property type="entry name" value="Rieske_2Fe-2S_sf"/>
</dbReference>
<dbReference type="InterPro" id="IPR014349">
    <property type="entry name" value="Rieske_Fe-S_prot"/>
</dbReference>
<dbReference type="InterPro" id="IPR005805">
    <property type="entry name" value="Rieske_Fe-S_prot_C"/>
</dbReference>
<dbReference type="NCBIfam" id="NF045928">
    <property type="entry name" value="Cytb6fFeSPetC"/>
    <property type="match status" value="1"/>
</dbReference>
<dbReference type="NCBIfam" id="NF010001">
    <property type="entry name" value="PRK13474.1"/>
    <property type="match status" value="1"/>
</dbReference>
<dbReference type="PANTHER" id="PTHR10134">
    <property type="entry name" value="CYTOCHROME B-C1 COMPLEX SUBUNIT RIESKE, MITOCHONDRIAL"/>
    <property type="match status" value="1"/>
</dbReference>
<dbReference type="Pfam" id="PF00355">
    <property type="entry name" value="Rieske"/>
    <property type="match status" value="1"/>
</dbReference>
<dbReference type="Pfam" id="PF25471">
    <property type="entry name" value="TM_PetC"/>
    <property type="match status" value="1"/>
</dbReference>
<dbReference type="PRINTS" id="PR00162">
    <property type="entry name" value="RIESKE"/>
</dbReference>
<dbReference type="SUPFAM" id="SSF50022">
    <property type="entry name" value="ISP domain"/>
    <property type="match status" value="1"/>
</dbReference>
<dbReference type="PROSITE" id="PS51296">
    <property type="entry name" value="RIESKE"/>
    <property type="match status" value="1"/>
</dbReference>